<comment type="function">
    <text evidence="1">Allows the formation of correctly charged Asn-tRNA(Asn) or Gln-tRNA(Gln) through the transamidation of misacylated Asp-tRNA(Asn) or Glu-tRNA(Gln) in organisms which lack either or both of asparaginyl-tRNA or glutaminyl-tRNA synthetases. The reaction takes place in the presence of glutamine and ATP through an activated phospho-Asp-tRNA(Asn) or phospho-Glu-tRNA(Gln).</text>
</comment>
<comment type="catalytic activity">
    <reaction evidence="1">
        <text>L-glutamyl-tRNA(Gln) + L-glutamine + ATP + H2O = L-glutaminyl-tRNA(Gln) + L-glutamate + ADP + phosphate + H(+)</text>
        <dbReference type="Rhea" id="RHEA:17521"/>
        <dbReference type="Rhea" id="RHEA-COMP:9681"/>
        <dbReference type="Rhea" id="RHEA-COMP:9684"/>
        <dbReference type="ChEBI" id="CHEBI:15377"/>
        <dbReference type="ChEBI" id="CHEBI:15378"/>
        <dbReference type="ChEBI" id="CHEBI:29985"/>
        <dbReference type="ChEBI" id="CHEBI:30616"/>
        <dbReference type="ChEBI" id="CHEBI:43474"/>
        <dbReference type="ChEBI" id="CHEBI:58359"/>
        <dbReference type="ChEBI" id="CHEBI:78520"/>
        <dbReference type="ChEBI" id="CHEBI:78521"/>
        <dbReference type="ChEBI" id="CHEBI:456216"/>
    </reaction>
</comment>
<comment type="catalytic activity">
    <reaction evidence="1">
        <text>L-aspartyl-tRNA(Asn) + L-glutamine + ATP + H2O = L-asparaginyl-tRNA(Asn) + L-glutamate + ADP + phosphate + 2 H(+)</text>
        <dbReference type="Rhea" id="RHEA:14513"/>
        <dbReference type="Rhea" id="RHEA-COMP:9674"/>
        <dbReference type="Rhea" id="RHEA-COMP:9677"/>
        <dbReference type="ChEBI" id="CHEBI:15377"/>
        <dbReference type="ChEBI" id="CHEBI:15378"/>
        <dbReference type="ChEBI" id="CHEBI:29985"/>
        <dbReference type="ChEBI" id="CHEBI:30616"/>
        <dbReference type="ChEBI" id="CHEBI:43474"/>
        <dbReference type="ChEBI" id="CHEBI:58359"/>
        <dbReference type="ChEBI" id="CHEBI:78515"/>
        <dbReference type="ChEBI" id="CHEBI:78516"/>
        <dbReference type="ChEBI" id="CHEBI:456216"/>
    </reaction>
</comment>
<comment type="subunit">
    <text evidence="1">Heterotrimer of A, B and C subunits.</text>
</comment>
<comment type="similarity">
    <text evidence="1">Belongs to the GatC family.</text>
</comment>
<sequence>MISEEQVRHVAELARLGLTDEEVARMGGQLGAILDSIEKIRELDLEGVPPTANPLNLTNVFRPDEPRESLRREEALAVAPETADGMFAVPRID</sequence>
<reference key="1">
    <citation type="submission" date="2006-06" db="EMBL/GenBank/DDBJ databases">
        <title>Complete sequence of Rubrobacter xylanophilus DSM 9941.</title>
        <authorList>
            <consortium name="US DOE Joint Genome Institute"/>
            <person name="Copeland A."/>
            <person name="Lucas S."/>
            <person name="Lapidus A."/>
            <person name="Barry K."/>
            <person name="Detter J.C."/>
            <person name="Glavina del Rio T."/>
            <person name="Hammon N."/>
            <person name="Israni S."/>
            <person name="Dalin E."/>
            <person name="Tice H."/>
            <person name="Pitluck S."/>
            <person name="Munk A.C."/>
            <person name="Brettin T."/>
            <person name="Bruce D."/>
            <person name="Han C."/>
            <person name="Tapia R."/>
            <person name="Gilna P."/>
            <person name="Schmutz J."/>
            <person name="Larimer F."/>
            <person name="Land M."/>
            <person name="Hauser L."/>
            <person name="Kyrpides N."/>
            <person name="Lykidis A."/>
            <person name="da Costa M.S."/>
            <person name="Rainey F.A."/>
            <person name="Empadinhas N."/>
            <person name="Jolivet E."/>
            <person name="Battista J.R."/>
            <person name="Richardson P."/>
        </authorList>
    </citation>
    <scope>NUCLEOTIDE SEQUENCE [LARGE SCALE GENOMIC DNA]</scope>
    <source>
        <strain>DSM 9941 / JCM 11954 / NBRC 16129 / PRD-1</strain>
    </source>
</reference>
<name>GATC_RUBXD</name>
<accession>Q1AXT1</accession>
<evidence type="ECO:0000255" key="1">
    <source>
        <dbReference type="HAMAP-Rule" id="MF_00122"/>
    </source>
</evidence>
<dbReference type="EC" id="6.3.5.-" evidence="1"/>
<dbReference type="EMBL" id="CP000386">
    <property type="protein sequence ID" value="ABG03797.1"/>
    <property type="molecule type" value="Genomic_DNA"/>
</dbReference>
<dbReference type="SMR" id="Q1AXT1"/>
<dbReference type="STRING" id="266117.Rxyl_0829"/>
<dbReference type="KEGG" id="rxy:Rxyl_0829"/>
<dbReference type="eggNOG" id="COG0721">
    <property type="taxonomic scope" value="Bacteria"/>
</dbReference>
<dbReference type="HOGENOM" id="CLU_105899_6_1_11"/>
<dbReference type="OrthoDB" id="5295223at2"/>
<dbReference type="PhylomeDB" id="Q1AXT1"/>
<dbReference type="Proteomes" id="UP000006637">
    <property type="component" value="Chromosome"/>
</dbReference>
<dbReference type="GO" id="GO:0050566">
    <property type="term" value="F:asparaginyl-tRNA synthase (glutamine-hydrolyzing) activity"/>
    <property type="evidence" value="ECO:0007669"/>
    <property type="project" value="RHEA"/>
</dbReference>
<dbReference type="GO" id="GO:0005524">
    <property type="term" value="F:ATP binding"/>
    <property type="evidence" value="ECO:0007669"/>
    <property type="project" value="UniProtKB-KW"/>
</dbReference>
<dbReference type="GO" id="GO:0050567">
    <property type="term" value="F:glutaminyl-tRNA synthase (glutamine-hydrolyzing) activity"/>
    <property type="evidence" value="ECO:0007669"/>
    <property type="project" value="UniProtKB-UniRule"/>
</dbReference>
<dbReference type="GO" id="GO:0070681">
    <property type="term" value="P:glutaminyl-tRNAGln biosynthesis via transamidation"/>
    <property type="evidence" value="ECO:0007669"/>
    <property type="project" value="TreeGrafter"/>
</dbReference>
<dbReference type="GO" id="GO:0006450">
    <property type="term" value="P:regulation of translational fidelity"/>
    <property type="evidence" value="ECO:0007669"/>
    <property type="project" value="InterPro"/>
</dbReference>
<dbReference type="GO" id="GO:0006412">
    <property type="term" value="P:translation"/>
    <property type="evidence" value="ECO:0007669"/>
    <property type="project" value="UniProtKB-UniRule"/>
</dbReference>
<dbReference type="Gene3D" id="1.10.20.60">
    <property type="entry name" value="Glu-tRNAGln amidotransferase C subunit, N-terminal domain"/>
    <property type="match status" value="1"/>
</dbReference>
<dbReference type="HAMAP" id="MF_00122">
    <property type="entry name" value="GatC"/>
    <property type="match status" value="1"/>
</dbReference>
<dbReference type="InterPro" id="IPR036113">
    <property type="entry name" value="Asp/Glu-ADT_sf_sub_c"/>
</dbReference>
<dbReference type="InterPro" id="IPR003837">
    <property type="entry name" value="GatC"/>
</dbReference>
<dbReference type="NCBIfam" id="TIGR00135">
    <property type="entry name" value="gatC"/>
    <property type="match status" value="1"/>
</dbReference>
<dbReference type="PANTHER" id="PTHR15004">
    <property type="entry name" value="GLUTAMYL-TRNA(GLN) AMIDOTRANSFERASE SUBUNIT C, MITOCHONDRIAL"/>
    <property type="match status" value="1"/>
</dbReference>
<dbReference type="PANTHER" id="PTHR15004:SF0">
    <property type="entry name" value="GLUTAMYL-TRNA(GLN) AMIDOTRANSFERASE SUBUNIT C, MITOCHONDRIAL"/>
    <property type="match status" value="1"/>
</dbReference>
<dbReference type="Pfam" id="PF02686">
    <property type="entry name" value="GatC"/>
    <property type="match status" value="1"/>
</dbReference>
<dbReference type="SUPFAM" id="SSF141000">
    <property type="entry name" value="Glu-tRNAGln amidotransferase C subunit"/>
    <property type="match status" value="1"/>
</dbReference>
<proteinExistence type="inferred from homology"/>
<organism>
    <name type="scientific">Rubrobacter xylanophilus (strain DSM 9941 / JCM 11954 / NBRC 16129 / PRD-1)</name>
    <dbReference type="NCBI Taxonomy" id="266117"/>
    <lineage>
        <taxon>Bacteria</taxon>
        <taxon>Bacillati</taxon>
        <taxon>Actinomycetota</taxon>
        <taxon>Rubrobacteria</taxon>
        <taxon>Rubrobacterales</taxon>
        <taxon>Rubrobacteraceae</taxon>
        <taxon>Rubrobacter</taxon>
    </lineage>
</organism>
<protein>
    <recommendedName>
        <fullName evidence="1">Aspartyl/glutamyl-tRNA(Asn/Gln) amidotransferase subunit C</fullName>
        <shortName evidence="1">Asp/Glu-ADT subunit C</shortName>
        <ecNumber evidence="1">6.3.5.-</ecNumber>
    </recommendedName>
</protein>
<feature type="chain" id="PRO_1000071390" description="Aspartyl/glutamyl-tRNA(Asn/Gln) amidotransferase subunit C">
    <location>
        <begin position="1"/>
        <end position="93"/>
    </location>
</feature>
<keyword id="KW-0067">ATP-binding</keyword>
<keyword id="KW-0436">Ligase</keyword>
<keyword id="KW-0547">Nucleotide-binding</keyword>
<keyword id="KW-0648">Protein biosynthesis</keyword>
<keyword id="KW-1185">Reference proteome</keyword>
<gene>
    <name evidence="1" type="primary">gatC</name>
    <name type="ordered locus">Rxyl_0829</name>
</gene>